<proteinExistence type="inferred from homology"/>
<comment type="function">
    <text evidence="1">Binds 16S rRNA, required for the assembly of 30S particles and may also be responsible for determining the conformation of the 16S rRNA at the A site.</text>
</comment>
<comment type="subunit">
    <text evidence="1">Part of the 30S ribosomal subunit. Contacts proteins S3 and S10.</text>
</comment>
<comment type="similarity">
    <text evidence="1">Belongs to the universal ribosomal protein uS14 family.</text>
</comment>
<gene>
    <name evidence="1" type="primary">rpsN</name>
    <name type="ordered locus">Bcep18194_A3460</name>
</gene>
<reference key="1">
    <citation type="submission" date="2005-10" db="EMBL/GenBank/DDBJ databases">
        <title>Complete sequence of chromosome 1 of Burkholderia sp. 383.</title>
        <authorList>
            <consortium name="US DOE Joint Genome Institute"/>
            <person name="Copeland A."/>
            <person name="Lucas S."/>
            <person name="Lapidus A."/>
            <person name="Barry K."/>
            <person name="Detter J.C."/>
            <person name="Glavina T."/>
            <person name="Hammon N."/>
            <person name="Israni S."/>
            <person name="Pitluck S."/>
            <person name="Chain P."/>
            <person name="Malfatti S."/>
            <person name="Shin M."/>
            <person name="Vergez L."/>
            <person name="Schmutz J."/>
            <person name="Larimer F."/>
            <person name="Land M."/>
            <person name="Kyrpides N."/>
            <person name="Lykidis A."/>
            <person name="Richardson P."/>
        </authorList>
    </citation>
    <scope>NUCLEOTIDE SEQUENCE [LARGE SCALE GENOMIC DNA]</scope>
    <source>
        <strain>ATCC 17760 / DSM 23089 / LMG 22485 / NCIMB 9086 / R18194 / 383</strain>
    </source>
</reference>
<protein>
    <recommendedName>
        <fullName evidence="1">Small ribosomal subunit protein uS14</fullName>
    </recommendedName>
    <alternativeName>
        <fullName evidence="2">30S ribosomal protein S14</fullName>
    </alternativeName>
</protein>
<keyword id="KW-0687">Ribonucleoprotein</keyword>
<keyword id="KW-0689">Ribosomal protein</keyword>
<keyword id="KW-0694">RNA-binding</keyword>
<keyword id="KW-0699">rRNA-binding</keyword>
<name>RS14_BURL3</name>
<sequence length="101" mass="11692">MAKLALIEREKKRARLVAKFAAKRDALKAIVEDQSKSEEERYEARLELQQLPRNANPTRQRNRCAITGRPRGTFRKFGLARNKIREIAFRGEIPGLTKASW</sequence>
<feature type="chain" id="PRO_1000128343" description="Small ribosomal subunit protein uS14">
    <location>
        <begin position="1"/>
        <end position="101"/>
    </location>
</feature>
<dbReference type="EMBL" id="CP000151">
    <property type="protein sequence ID" value="ABB07062.1"/>
    <property type="molecule type" value="Genomic_DNA"/>
</dbReference>
<dbReference type="RefSeq" id="WP_011350676.1">
    <property type="nucleotide sequence ID" value="NZ_WNDV01000034.1"/>
</dbReference>
<dbReference type="SMR" id="Q39KF4"/>
<dbReference type="GeneID" id="93193438"/>
<dbReference type="KEGG" id="bur:Bcep18194_A3460"/>
<dbReference type="HOGENOM" id="CLU_139869_0_1_4"/>
<dbReference type="Proteomes" id="UP000002705">
    <property type="component" value="Chromosome 1"/>
</dbReference>
<dbReference type="GO" id="GO:0005737">
    <property type="term" value="C:cytoplasm"/>
    <property type="evidence" value="ECO:0007669"/>
    <property type="project" value="UniProtKB-ARBA"/>
</dbReference>
<dbReference type="GO" id="GO:0015935">
    <property type="term" value="C:small ribosomal subunit"/>
    <property type="evidence" value="ECO:0007669"/>
    <property type="project" value="TreeGrafter"/>
</dbReference>
<dbReference type="GO" id="GO:0019843">
    <property type="term" value="F:rRNA binding"/>
    <property type="evidence" value="ECO:0007669"/>
    <property type="project" value="UniProtKB-UniRule"/>
</dbReference>
<dbReference type="GO" id="GO:0003735">
    <property type="term" value="F:structural constituent of ribosome"/>
    <property type="evidence" value="ECO:0007669"/>
    <property type="project" value="InterPro"/>
</dbReference>
<dbReference type="GO" id="GO:0006412">
    <property type="term" value="P:translation"/>
    <property type="evidence" value="ECO:0007669"/>
    <property type="project" value="UniProtKB-UniRule"/>
</dbReference>
<dbReference type="FunFam" id="1.10.287.1480:FF:000001">
    <property type="entry name" value="30S ribosomal protein S14"/>
    <property type="match status" value="1"/>
</dbReference>
<dbReference type="Gene3D" id="1.10.287.1480">
    <property type="match status" value="1"/>
</dbReference>
<dbReference type="HAMAP" id="MF_00537">
    <property type="entry name" value="Ribosomal_uS14_1"/>
    <property type="match status" value="1"/>
</dbReference>
<dbReference type="InterPro" id="IPR001209">
    <property type="entry name" value="Ribosomal_uS14"/>
</dbReference>
<dbReference type="InterPro" id="IPR023036">
    <property type="entry name" value="Ribosomal_uS14_bac/plastid"/>
</dbReference>
<dbReference type="NCBIfam" id="NF006477">
    <property type="entry name" value="PRK08881.1"/>
    <property type="match status" value="1"/>
</dbReference>
<dbReference type="PANTHER" id="PTHR19836">
    <property type="entry name" value="30S RIBOSOMAL PROTEIN S14"/>
    <property type="match status" value="1"/>
</dbReference>
<dbReference type="PANTHER" id="PTHR19836:SF19">
    <property type="entry name" value="SMALL RIBOSOMAL SUBUNIT PROTEIN US14M"/>
    <property type="match status" value="1"/>
</dbReference>
<dbReference type="Pfam" id="PF00253">
    <property type="entry name" value="Ribosomal_S14"/>
    <property type="match status" value="1"/>
</dbReference>
<dbReference type="SUPFAM" id="SSF57716">
    <property type="entry name" value="Glucocorticoid receptor-like (DNA-binding domain)"/>
    <property type="match status" value="1"/>
</dbReference>
<evidence type="ECO:0000255" key="1">
    <source>
        <dbReference type="HAMAP-Rule" id="MF_00537"/>
    </source>
</evidence>
<evidence type="ECO:0000305" key="2"/>
<organism>
    <name type="scientific">Burkholderia lata (strain ATCC 17760 / DSM 23089 / LMG 22485 / NCIMB 9086 / R18194 / 383)</name>
    <dbReference type="NCBI Taxonomy" id="482957"/>
    <lineage>
        <taxon>Bacteria</taxon>
        <taxon>Pseudomonadati</taxon>
        <taxon>Pseudomonadota</taxon>
        <taxon>Betaproteobacteria</taxon>
        <taxon>Burkholderiales</taxon>
        <taxon>Burkholderiaceae</taxon>
        <taxon>Burkholderia</taxon>
        <taxon>Burkholderia cepacia complex</taxon>
    </lineage>
</organism>
<accession>Q39KF4</accession>